<comment type="function">
    <text evidence="1">Promotes RNA polymerase assembly. Latches the N- and C-terminal regions of the beta' subunit thereby facilitating its interaction with the beta and alpha subunits.</text>
</comment>
<comment type="catalytic activity">
    <reaction evidence="1">
        <text>RNA(n) + a ribonucleoside 5'-triphosphate = RNA(n+1) + diphosphate</text>
        <dbReference type="Rhea" id="RHEA:21248"/>
        <dbReference type="Rhea" id="RHEA-COMP:14527"/>
        <dbReference type="Rhea" id="RHEA-COMP:17342"/>
        <dbReference type="ChEBI" id="CHEBI:33019"/>
        <dbReference type="ChEBI" id="CHEBI:61557"/>
        <dbReference type="ChEBI" id="CHEBI:140395"/>
        <dbReference type="EC" id="2.7.7.6"/>
    </reaction>
</comment>
<comment type="subunit">
    <text evidence="1">The RNAP catalytic core consists of 2 alpha, 1 beta, 1 beta' and 1 omega subunit. When a sigma factor is associated with the core the holoenzyme is formed, which can initiate transcription.</text>
</comment>
<comment type="similarity">
    <text evidence="1">Belongs to the RNA polymerase subunit omega family.</text>
</comment>
<proteinExistence type="inferred from homology"/>
<keyword id="KW-0240">DNA-directed RNA polymerase</keyword>
<keyword id="KW-0548">Nucleotidyltransferase</keyword>
<keyword id="KW-1185">Reference proteome</keyword>
<keyword id="KW-0804">Transcription</keyword>
<keyword id="KW-0808">Transferase</keyword>
<sequence>MARVTVEDCIDKVDNRFELVLLAGHRARMISSGSPITVDRDNDKNPVVALREIADETVSPEDLKEDLIHSLQKYTEVDEPEPESVPLIASSEGGVDDADIVLDRMTEEELLAGLQGLVPPEQTDDDEG</sequence>
<gene>
    <name evidence="1" type="primary">rpoZ</name>
    <name type="ordered locus">AZC_1253</name>
</gene>
<evidence type="ECO:0000255" key="1">
    <source>
        <dbReference type="HAMAP-Rule" id="MF_00366"/>
    </source>
</evidence>
<name>RPOZ_AZOC5</name>
<dbReference type="EC" id="2.7.7.6" evidence="1"/>
<dbReference type="EMBL" id="AP009384">
    <property type="protein sequence ID" value="BAF87251.1"/>
    <property type="molecule type" value="Genomic_DNA"/>
</dbReference>
<dbReference type="RefSeq" id="WP_012169784.1">
    <property type="nucleotide sequence ID" value="NC_009937.1"/>
</dbReference>
<dbReference type="SMR" id="A8I0F9"/>
<dbReference type="STRING" id="438753.AZC_1253"/>
<dbReference type="KEGG" id="azc:AZC_1253"/>
<dbReference type="eggNOG" id="COG1758">
    <property type="taxonomic scope" value="Bacteria"/>
</dbReference>
<dbReference type="HOGENOM" id="CLU_125406_2_0_5"/>
<dbReference type="Proteomes" id="UP000000270">
    <property type="component" value="Chromosome"/>
</dbReference>
<dbReference type="GO" id="GO:0000428">
    <property type="term" value="C:DNA-directed RNA polymerase complex"/>
    <property type="evidence" value="ECO:0007669"/>
    <property type="project" value="UniProtKB-KW"/>
</dbReference>
<dbReference type="GO" id="GO:0003677">
    <property type="term" value="F:DNA binding"/>
    <property type="evidence" value="ECO:0007669"/>
    <property type="project" value="UniProtKB-UniRule"/>
</dbReference>
<dbReference type="GO" id="GO:0003899">
    <property type="term" value="F:DNA-directed RNA polymerase activity"/>
    <property type="evidence" value="ECO:0007669"/>
    <property type="project" value="UniProtKB-UniRule"/>
</dbReference>
<dbReference type="GO" id="GO:0006351">
    <property type="term" value="P:DNA-templated transcription"/>
    <property type="evidence" value="ECO:0007669"/>
    <property type="project" value="UniProtKB-UniRule"/>
</dbReference>
<dbReference type="Gene3D" id="3.90.940.10">
    <property type="match status" value="1"/>
</dbReference>
<dbReference type="HAMAP" id="MF_00366">
    <property type="entry name" value="RNApol_bact_RpoZ"/>
    <property type="match status" value="1"/>
</dbReference>
<dbReference type="InterPro" id="IPR003716">
    <property type="entry name" value="DNA-dir_RNA_pol_omega"/>
</dbReference>
<dbReference type="InterPro" id="IPR006110">
    <property type="entry name" value="Pol_omega/Rpo6/RPB6"/>
</dbReference>
<dbReference type="InterPro" id="IPR036161">
    <property type="entry name" value="RPB6/omega-like_sf"/>
</dbReference>
<dbReference type="NCBIfam" id="TIGR00690">
    <property type="entry name" value="rpoZ"/>
    <property type="match status" value="1"/>
</dbReference>
<dbReference type="PANTHER" id="PTHR34476">
    <property type="entry name" value="DNA-DIRECTED RNA POLYMERASE SUBUNIT OMEGA"/>
    <property type="match status" value="1"/>
</dbReference>
<dbReference type="PANTHER" id="PTHR34476:SF1">
    <property type="entry name" value="DNA-DIRECTED RNA POLYMERASE SUBUNIT OMEGA"/>
    <property type="match status" value="1"/>
</dbReference>
<dbReference type="Pfam" id="PF01192">
    <property type="entry name" value="RNA_pol_Rpb6"/>
    <property type="match status" value="1"/>
</dbReference>
<dbReference type="SMART" id="SM01409">
    <property type="entry name" value="RNA_pol_Rpb6"/>
    <property type="match status" value="1"/>
</dbReference>
<dbReference type="SUPFAM" id="SSF63562">
    <property type="entry name" value="RPB6/omega subunit-like"/>
    <property type="match status" value="1"/>
</dbReference>
<feature type="chain" id="PRO_1000072103" description="DNA-directed RNA polymerase subunit omega">
    <location>
        <begin position="1"/>
        <end position="128"/>
    </location>
</feature>
<organism>
    <name type="scientific">Azorhizobium caulinodans (strain ATCC 43989 / DSM 5975 / JCM 20966 / LMG 6465 / NBRC 14845 / NCIMB 13405 / ORS 571)</name>
    <dbReference type="NCBI Taxonomy" id="438753"/>
    <lineage>
        <taxon>Bacteria</taxon>
        <taxon>Pseudomonadati</taxon>
        <taxon>Pseudomonadota</taxon>
        <taxon>Alphaproteobacteria</taxon>
        <taxon>Hyphomicrobiales</taxon>
        <taxon>Xanthobacteraceae</taxon>
        <taxon>Azorhizobium</taxon>
    </lineage>
</organism>
<accession>A8I0F9</accession>
<protein>
    <recommendedName>
        <fullName evidence="1">DNA-directed RNA polymerase subunit omega</fullName>
        <shortName evidence="1">RNAP omega subunit</shortName>
        <ecNumber evidence="1">2.7.7.6</ecNumber>
    </recommendedName>
    <alternativeName>
        <fullName evidence="1">RNA polymerase omega subunit</fullName>
    </alternativeName>
    <alternativeName>
        <fullName evidence="1">Transcriptase subunit omega</fullName>
    </alternativeName>
</protein>
<reference key="1">
    <citation type="submission" date="2007-04" db="EMBL/GenBank/DDBJ databases">
        <title>Complete genome sequence of the nitrogen-fixing bacterium Azorhizobium caulinodans ORS571.</title>
        <authorList>
            <person name="Lee K.B."/>
            <person name="Backer P.D."/>
            <person name="Aono T."/>
            <person name="Liu C.T."/>
            <person name="Suzuki S."/>
            <person name="Suzuki T."/>
            <person name="Kaneko T."/>
            <person name="Yamada M."/>
            <person name="Tabata S."/>
            <person name="Kupfer D.M."/>
            <person name="Najar F.Z."/>
            <person name="Wiley G.B."/>
            <person name="Roe B."/>
            <person name="Binnewies T."/>
            <person name="Ussery D."/>
            <person name="Vereecke D."/>
            <person name="Gevers D."/>
            <person name="Holsters M."/>
            <person name="Oyaizu H."/>
        </authorList>
    </citation>
    <scope>NUCLEOTIDE SEQUENCE [LARGE SCALE GENOMIC DNA]</scope>
    <source>
        <strain>ATCC 43989 / DSM 5975 / JCM 20966 / LMG 6465 / NBRC 14845 / NCIMB 13405 / ORS 571</strain>
    </source>
</reference>